<reference key="1">
    <citation type="journal article" date="2009" name="PLoS ONE">
        <title>Salmonella paratyphi C: genetic divergence from Salmonella choleraesuis and pathogenic convergence with Salmonella typhi.</title>
        <authorList>
            <person name="Liu W.-Q."/>
            <person name="Feng Y."/>
            <person name="Wang Y."/>
            <person name="Zou Q.-H."/>
            <person name="Chen F."/>
            <person name="Guo J.-T."/>
            <person name="Peng Y.-H."/>
            <person name="Jin Y."/>
            <person name="Li Y.-G."/>
            <person name="Hu S.-N."/>
            <person name="Johnston R.N."/>
            <person name="Liu G.-R."/>
            <person name="Liu S.-L."/>
        </authorList>
    </citation>
    <scope>NUCLEOTIDE SEQUENCE [LARGE SCALE GENOMIC DNA]</scope>
    <source>
        <strain>RKS4594</strain>
    </source>
</reference>
<gene>
    <name evidence="1" type="primary">nudC</name>
    <name type="ordered locus">SPC_3997</name>
</gene>
<accession>C0Q2S8</accession>
<evidence type="ECO:0000255" key="1">
    <source>
        <dbReference type="HAMAP-Rule" id="MF_00297"/>
    </source>
</evidence>
<sequence length="257" mass="29560">MDRIIEKLESGWWIVSHEQKLWLPYGELPHGLAANFDLVGQRALRIGEWQGEPVWLVLQHRRHDMGSVRQVIDQDAGLFQLAGRGVQLAEFYRSHKFCGYCGHPMHPSKTEWAMLCSHCRERYYPQIAPCIIVAIRREDSILLAQHVRHRNGVHTVLAGFVEVGETLEQAVAREVMEESGIKVKNLRYVTSQPWPFPQSLMTAFMAEYDSGEIAIDPKELLEANWYHYDDLPLLPPPGTVARRLIEDTVAMCRAEYD</sequence>
<dbReference type="EC" id="3.6.1.-" evidence="1"/>
<dbReference type="EC" id="3.6.1.22" evidence="1"/>
<dbReference type="EMBL" id="CP000857">
    <property type="protein sequence ID" value="ACN48064.1"/>
    <property type="molecule type" value="Genomic_DNA"/>
</dbReference>
<dbReference type="RefSeq" id="WP_000373957.1">
    <property type="nucleotide sequence ID" value="NC_012125.1"/>
</dbReference>
<dbReference type="SMR" id="C0Q2S8"/>
<dbReference type="KEGG" id="sei:SPC_3997"/>
<dbReference type="HOGENOM" id="CLU_037162_0_1_6"/>
<dbReference type="Proteomes" id="UP000001599">
    <property type="component" value="Chromosome"/>
</dbReference>
<dbReference type="GO" id="GO:0005829">
    <property type="term" value="C:cytosol"/>
    <property type="evidence" value="ECO:0007669"/>
    <property type="project" value="TreeGrafter"/>
</dbReference>
<dbReference type="GO" id="GO:0000287">
    <property type="term" value="F:magnesium ion binding"/>
    <property type="evidence" value="ECO:0007669"/>
    <property type="project" value="UniProtKB-UniRule"/>
</dbReference>
<dbReference type="GO" id="GO:0030145">
    <property type="term" value="F:manganese ion binding"/>
    <property type="evidence" value="ECO:0007669"/>
    <property type="project" value="UniProtKB-UniRule"/>
</dbReference>
<dbReference type="GO" id="GO:0000210">
    <property type="term" value="F:NAD+ diphosphatase activity"/>
    <property type="evidence" value="ECO:0007669"/>
    <property type="project" value="UniProtKB-UniRule"/>
</dbReference>
<dbReference type="GO" id="GO:0035529">
    <property type="term" value="F:NADH pyrophosphatase activity"/>
    <property type="evidence" value="ECO:0007669"/>
    <property type="project" value="TreeGrafter"/>
</dbReference>
<dbReference type="GO" id="GO:0110153">
    <property type="term" value="F:RNA NAD-cap (NMN-forming) hydrolase activity"/>
    <property type="evidence" value="ECO:0007669"/>
    <property type="project" value="RHEA"/>
</dbReference>
<dbReference type="GO" id="GO:0008270">
    <property type="term" value="F:zinc ion binding"/>
    <property type="evidence" value="ECO:0007669"/>
    <property type="project" value="UniProtKB-UniRule"/>
</dbReference>
<dbReference type="GO" id="GO:0019677">
    <property type="term" value="P:NAD catabolic process"/>
    <property type="evidence" value="ECO:0007669"/>
    <property type="project" value="TreeGrafter"/>
</dbReference>
<dbReference type="GO" id="GO:0006734">
    <property type="term" value="P:NADH metabolic process"/>
    <property type="evidence" value="ECO:0007669"/>
    <property type="project" value="TreeGrafter"/>
</dbReference>
<dbReference type="GO" id="GO:0006742">
    <property type="term" value="P:NADP catabolic process"/>
    <property type="evidence" value="ECO:0007669"/>
    <property type="project" value="TreeGrafter"/>
</dbReference>
<dbReference type="CDD" id="cd03429">
    <property type="entry name" value="NUDIX_NADH_pyrophosphatase_Nudt13"/>
    <property type="match status" value="1"/>
</dbReference>
<dbReference type="FunFam" id="3.90.79.10:FF:000004">
    <property type="entry name" value="NADH pyrophosphatase"/>
    <property type="match status" value="1"/>
</dbReference>
<dbReference type="FunFam" id="3.90.79.20:FF:000001">
    <property type="entry name" value="NADH pyrophosphatase"/>
    <property type="match status" value="1"/>
</dbReference>
<dbReference type="Gene3D" id="3.90.79.20">
    <property type="match status" value="1"/>
</dbReference>
<dbReference type="Gene3D" id="3.90.79.10">
    <property type="entry name" value="Nucleoside Triphosphate Pyrophosphohydrolase"/>
    <property type="match status" value="1"/>
</dbReference>
<dbReference type="HAMAP" id="MF_00297">
    <property type="entry name" value="Nudix_NudC"/>
    <property type="match status" value="1"/>
</dbReference>
<dbReference type="InterPro" id="IPR050241">
    <property type="entry name" value="NAD-cap_RNA_hydrolase_NudC"/>
</dbReference>
<dbReference type="InterPro" id="IPR049734">
    <property type="entry name" value="NudC-like_C"/>
</dbReference>
<dbReference type="InterPro" id="IPR015797">
    <property type="entry name" value="NUDIX_hydrolase-like_dom_sf"/>
</dbReference>
<dbReference type="InterPro" id="IPR020084">
    <property type="entry name" value="NUDIX_hydrolase_CS"/>
</dbReference>
<dbReference type="InterPro" id="IPR000086">
    <property type="entry name" value="NUDIX_hydrolase_dom"/>
</dbReference>
<dbReference type="InterPro" id="IPR022925">
    <property type="entry name" value="RNA_Hydrolase_NudC"/>
</dbReference>
<dbReference type="InterPro" id="IPR015376">
    <property type="entry name" value="Znr_NADH_PPase"/>
</dbReference>
<dbReference type="NCBIfam" id="NF001299">
    <property type="entry name" value="PRK00241.1"/>
    <property type="match status" value="1"/>
</dbReference>
<dbReference type="PANTHER" id="PTHR42904:SF6">
    <property type="entry name" value="NAD-CAPPED RNA HYDROLASE NUDT12"/>
    <property type="match status" value="1"/>
</dbReference>
<dbReference type="PANTHER" id="PTHR42904">
    <property type="entry name" value="NUDIX HYDROLASE, NUDC SUBFAMILY"/>
    <property type="match status" value="1"/>
</dbReference>
<dbReference type="Pfam" id="PF00293">
    <property type="entry name" value="NUDIX"/>
    <property type="match status" value="1"/>
</dbReference>
<dbReference type="Pfam" id="PF09297">
    <property type="entry name" value="Zn_ribbon_NUD"/>
    <property type="match status" value="1"/>
</dbReference>
<dbReference type="SUPFAM" id="SSF55811">
    <property type="entry name" value="Nudix"/>
    <property type="match status" value="2"/>
</dbReference>
<dbReference type="PROSITE" id="PS51462">
    <property type="entry name" value="NUDIX"/>
    <property type="match status" value="1"/>
</dbReference>
<dbReference type="PROSITE" id="PS00893">
    <property type="entry name" value="NUDIX_BOX"/>
    <property type="match status" value="1"/>
</dbReference>
<organism>
    <name type="scientific">Salmonella paratyphi C (strain RKS4594)</name>
    <dbReference type="NCBI Taxonomy" id="476213"/>
    <lineage>
        <taxon>Bacteria</taxon>
        <taxon>Pseudomonadati</taxon>
        <taxon>Pseudomonadota</taxon>
        <taxon>Gammaproteobacteria</taxon>
        <taxon>Enterobacterales</taxon>
        <taxon>Enterobacteriaceae</taxon>
        <taxon>Salmonella</taxon>
    </lineage>
</organism>
<name>NUDC_SALPC</name>
<feature type="chain" id="PRO_1000191836" description="NAD-capped RNA hydrolase NudC">
    <location>
        <begin position="1"/>
        <end position="257"/>
    </location>
</feature>
<feature type="domain" description="Nudix hydrolase" evidence="1">
    <location>
        <begin position="125"/>
        <end position="248"/>
    </location>
</feature>
<feature type="short sequence motif" description="Nudix box" evidence="1">
    <location>
        <begin position="159"/>
        <end position="180"/>
    </location>
</feature>
<feature type="binding site" evidence="1">
    <location>
        <position position="69"/>
    </location>
    <ligand>
        <name>substrate</name>
    </ligand>
</feature>
<feature type="binding site" evidence="1">
    <location>
        <position position="98"/>
    </location>
    <ligand>
        <name>Zn(2+)</name>
        <dbReference type="ChEBI" id="CHEBI:29105"/>
    </ligand>
</feature>
<feature type="binding site" evidence="1">
    <location>
        <position position="101"/>
    </location>
    <ligand>
        <name>Zn(2+)</name>
        <dbReference type="ChEBI" id="CHEBI:29105"/>
    </ligand>
</feature>
<feature type="binding site" evidence="1">
    <location>
        <position position="111"/>
    </location>
    <ligand>
        <name>substrate</name>
    </ligand>
</feature>
<feature type="binding site" evidence="1">
    <location>
        <position position="116"/>
    </location>
    <ligand>
        <name>Zn(2+)</name>
        <dbReference type="ChEBI" id="CHEBI:29105"/>
    </ligand>
</feature>
<feature type="binding site" evidence="1">
    <location>
        <position position="119"/>
    </location>
    <ligand>
        <name>Zn(2+)</name>
        <dbReference type="ChEBI" id="CHEBI:29105"/>
    </ligand>
</feature>
<feature type="binding site" evidence="1">
    <location>
        <position position="124"/>
    </location>
    <ligand>
        <name>substrate</name>
    </ligand>
</feature>
<feature type="binding site" evidence="1">
    <location>
        <position position="158"/>
    </location>
    <ligand>
        <name>a divalent metal cation</name>
        <dbReference type="ChEBI" id="CHEBI:60240"/>
        <label>1</label>
    </ligand>
</feature>
<feature type="binding site" evidence="1">
    <location>
        <position position="174"/>
    </location>
    <ligand>
        <name>a divalent metal cation</name>
        <dbReference type="ChEBI" id="CHEBI:60240"/>
        <label>2</label>
    </ligand>
</feature>
<feature type="binding site" evidence="1">
    <location>
        <position position="174"/>
    </location>
    <ligand>
        <name>a divalent metal cation</name>
        <dbReference type="ChEBI" id="CHEBI:60240"/>
        <label>3</label>
    </ligand>
</feature>
<feature type="binding site" evidence="1">
    <location>
        <position position="178"/>
    </location>
    <ligand>
        <name>a divalent metal cation</name>
        <dbReference type="ChEBI" id="CHEBI:60240"/>
        <label>1</label>
    </ligand>
</feature>
<feature type="binding site" evidence="1">
    <location>
        <position position="178"/>
    </location>
    <ligand>
        <name>a divalent metal cation</name>
        <dbReference type="ChEBI" id="CHEBI:60240"/>
        <label>3</label>
    </ligand>
</feature>
<feature type="binding site" evidence="1">
    <location>
        <begin position="192"/>
        <end position="199"/>
    </location>
    <ligand>
        <name>substrate</name>
    </ligand>
</feature>
<feature type="binding site" evidence="1">
    <location>
        <position position="219"/>
    </location>
    <ligand>
        <name>a divalent metal cation</name>
        <dbReference type="ChEBI" id="CHEBI:60240"/>
        <label>1</label>
    </ligand>
</feature>
<feature type="binding site" evidence="1">
    <location>
        <position position="219"/>
    </location>
    <ligand>
        <name>a divalent metal cation</name>
        <dbReference type="ChEBI" id="CHEBI:60240"/>
        <label>3</label>
    </ligand>
</feature>
<feature type="binding site" evidence="1">
    <location>
        <position position="241"/>
    </location>
    <ligand>
        <name>substrate</name>
    </ligand>
</feature>
<comment type="function">
    <text evidence="1">mRNA decapping enzyme that specifically removes the nicotinamide adenine dinucleotide (NAD) cap from a subset of mRNAs by hydrolyzing the diphosphate linkage to produce nicotinamide mononucleotide (NMN) and 5' monophosphate mRNA. The NAD-cap is present at the 5'-end of some mRNAs and stabilizes RNA against 5'-processing. Has preference for mRNAs with a 5'-end purine. Catalyzes the hydrolysis of a broad range of dinucleotide pyrophosphates.</text>
</comment>
<comment type="catalytic activity">
    <reaction evidence="1">
        <text>a 5'-end NAD(+)-phospho-ribonucleoside in mRNA + H2O = a 5'-end phospho-adenosine-phospho-ribonucleoside in mRNA + beta-nicotinamide D-ribonucleotide + 2 H(+)</text>
        <dbReference type="Rhea" id="RHEA:60876"/>
        <dbReference type="Rhea" id="RHEA-COMP:15698"/>
        <dbReference type="Rhea" id="RHEA-COMP:15719"/>
        <dbReference type="ChEBI" id="CHEBI:14649"/>
        <dbReference type="ChEBI" id="CHEBI:15377"/>
        <dbReference type="ChEBI" id="CHEBI:15378"/>
        <dbReference type="ChEBI" id="CHEBI:144029"/>
        <dbReference type="ChEBI" id="CHEBI:144051"/>
    </reaction>
    <physiologicalReaction direction="left-to-right" evidence="1">
        <dbReference type="Rhea" id="RHEA:60877"/>
    </physiologicalReaction>
</comment>
<comment type="catalytic activity">
    <reaction evidence="1">
        <text>NAD(+) + H2O = beta-nicotinamide D-ribonucleotide + AMP + 2 H(+)</text>
        <dbReference type="Rhea" id="RHEA:11800"/>
        <dbReference type="ChEBI" id="CHEBI:14649"/>
        <dbReference type="ChEBI" id="CHEBI:15377"/>
        <dbReference type="ChEBI" id="CHEBI:15378"/>
        <dbReference type="ChEBI" id="CHEBI:57540"/>
        <dbReference type="ChEBI" id="CHEBI:456215"/>
        <dbReference type="EC" id="3.6.1.22"/>
    </reaction>
</comment>
<comment type="catalytic activity">
    <reaction evidence="1">
        <text>NADH + H2O = reduced beta-nicotinamide D-ribonucleotide + AMP + 2 H(+)</text>
        <dbReference type="Rhea" id="RHEA:48868"/>
        <dbReference type="ChEBI" id="CHEBI:15377"/>
        <dbReference type="ChEBI" id="CHEBI:15378"/>
        <dbReference type="ChEBI" id="CHEBI:57945"/>
        <dbReference type="ChEBI" id="CHEBI:90832"/>
        <dbReference type="ChEBI" id="CHEBI:456215"/>
        <dbReference type="EC" id="3.6.1.22"/>
    </reaction>
</comment>
<comment type="cofactor">
    <cofactor evidence="1">
        <name>Mg(2+)</name>
        <dbReference type="ChEBI" id="CHEBI:18420"/>
    </cofactor>
    <cofactor evidence="1">
        <name>Mn(2+)</name>
        <dbReference type="ChEBI" id="CHEBI:29035"/>
    </cofactor>
    <text evidence="1">Divalent metal cations. Mg(2+) or Mn(2+).</text>
</comment>
<comment type="cofactor">
    <cofactor evidence="1">
        <name>Zn(2+)</name>
        <dbReference type="ChEBI" id="CHEBI:29105"/>
    </cofactor>
    <text evidence="1">Binds 1 zinc ion per subunit.</text>
</comment>
<comment type="subunit">
    <text evidence="1">Homodimer.</text>
</comment>
<comment type="similarity">
    <text evidence="1">Belongs to the Nudix hydrolase family. NudC subfamily.</text>
</comment>
<proteinExistence type="inferred from homology"/>
<keyword id="KW-0378">Hydrolase</keyword>
<keyword id="KW-0460">Magnesium</keyword>
<keyword id="KW-0464">Manganese</keyword>
<keyword id="KW-0479">Metal-binding</keyword>
<keyword id="KW-0520">NAD</keyword>
<keyword id="KW-0862">Zinc</keyword>
<protein>
    <recommendedName>
        <fullName evidence="1">NAD-capped RNA hydrolase NudC</fullName>
        <shortName evidence="1">DeNADding enzyme NudC</shortName>
        <ecNumber evidence="1">3.6.1.-</ecNumber>
    </recommendedName>
    <alternativeName>
        <fullName evidence="1">NADH pyrophosphatase</fullName>
        <ecNumber evidence="1">3.6.1.22</ecNumber>
    </alternativeName>
</protein>